<comment type="function">
    <text evidence="1">Component of the coat protein complex II (COPII), that covers ER-derived vesicles involved in transport from the endoplasmic reticulum to the Golgi apparatus. COPII is composed of at least five proteins: the SEC23/24 complex, the SEC13/31 complex, and the protein SAR1. Acts in the cytoplasm to promote the transport of secretory, plasma membrane, and vacuolar proteins from the endoplasmic reticulum to the Golgi complex.</text>
</comment>
<comment type="subunit">
    <text evidence="1">Component of the coat protein complex II (COPII), composed of at least five proteins: the Sec23/24 complex, the Sec13/31 complex and Sar1.</text>
</comment>
<comment type="subcellular location">
    <subcellularLocation>
        <location evidence="1">Cytoplasmic vesicle</location>
        <location evidence="1">COPII-coated vesicle membrane</location>
        <topology evidence="1">Peripheral membrane protein</topology>
        <orientation evidence="1">Cytoplasmic side</orientation>
    </subcellularLocation>
    <subcellularLocation>
        <location evidence="1">Endoplasmic reticulum membrane</location>
        <topology evidence="1">Peripheral membrane protein</topology>
    </subcellularLocation>
    <subcellularLocation>
        <location evidence="1">Golgi apparatus membrane</location>
        <topology evidence="1">Peripheral membrane protein</topology>
    </subcellularLocation>
</comment>
<comment type="tissue specificity">
    <text evidence="3">Mainly expressed at low levels in pollen, leaves, roots and stems.</text>
</comment>
<comment type="developmental stage">
    <text evidence="3">During pollen development, accumulates progressively from the immature tricellular pollen (TRCP) stage and in mature pollen grains (MPGR).</text>
</comment>
<comment type="similarity">
    <text evidence="7">Belongs to the SEC23/SEC24 family. SEC24 subfamily.</text>
</comment>
<comment type="sequence caution" evidence="7">
    <conflict type="erroneous gene model prediction">
        <sequence resource="EMBL-CDS" id="CAA18597"/>
    </conflict>
</comment>
<comment type="sequence caution" evidence="7">
    <conflict type="erroneous gene model prediction">
        <sequence resource="EMBL-CDS" id="CAB79981"/>
    </conflict>
</comment>
<sequence length="1080" mass="116322">MVAPVPPGAPRPNSQQNSGPPNFYPGSQGNSNALADNMQNLSLNRPPPMMPGSGPRPPPPFGQSPQPFPQQSPSYGAPQRGPSPMSRPGPPAGMARPGGPPPVSQPAGFQSNVPLNRPTGPPSRQPSFGSRPSMPGGPVAQPAASSSGFPAFGPSGSVAAGPPPGSRPMAFGSPPPVGSGMSMPPSGMIGGPVSNGHQMVGSGGFPRGTQFPGAAVTTPQAPYVRPPSAPYARTPPQPLGSHSLSGNPPLTPFTAPSMPPPATFPGAPHGRPAVSGLPYGPPSAQVAPPLGFPGQMQPPRYGMGPLPNQSMTNIPTAMGQPGATVPGPSRIDPNQIPRPGSSSSPTVFETRQSNQANPPPPATSDYVVRDTGNCSPRYMRCTINQIPCTVDLLSTSGMQLALMVQPLALSHPSEEPIQVVDFGEGGPVRCSRCKGYINPFMKFIDQGRKFICNFCGYTDETPRDYHCNLGPDGRRRDVDERPELCRGTVEFVATKEYMVRDPMPAVYFFLIDVSMNAIQTGATAAACNAIQQVLSDLPEGPRTFVGIATFDSTIHFYNLKRALQQPLMLIVPDVQDVYTPLETDVVVQLSECRQHLELLLDSIPTMFQESKIPESAFGAAVKAAFLAMKSKGGKLMVFQSILCSVGVGALSSREAEGRANMSAGEKEAHKLLQPADKTLKTMAIEFAEYQVCVDIFITTQAYVDMASISVIPRTTGGQVYCYYPFSALSDPPKLYNDLKWNITRPQGFEAVMRVRCSQGIQVQEYSGNFCKRIPTDIDLPAHDDKLQDGAECAFQCALLYTTIYGERRIRVTTLSLSCTNMLSNLFRAADLDSQFACMLKQAANEIPSKALPLVKEQATNSCINALYAYRKFCATVTSSGQLILPEALKLFPLYTLALTKSVGLRTDGRIDDRSFWINYVSSLSTPLAIPLVYPRMISVHDLDVKDTEGSVLPPPIPLSSEHISNEGVYFLENGEDGLLFVGESVDSDILQKLFAVSSAAEIPNQFVLQQYDNQLSKKFNDAVNEIRRQRCSYLRIKLCKKGEPSGMLFLSYMVEDRTASGPSYVEFLVQVHRQIQLKMN</sequence>
<organism>
    <name type="scientific">Arabidopsis thaliana</name>
    <name type="common">Mouse-ear cress</name>
    <dbReference type="NCBI Taxonomy" id="3702"/>
    <lineage>
        <taxon>Eukaryota</taxon>
        <taxon>Viridiplantae</taxon>
        <taxon>Streptophyta</taxon>
        <taxon>Embryophyta</taxon>
        <taxon>Tracheophyta</taxon>
        <taxon>Spermatophyta</taxon>
        <taxon>Magnoliopsida</taxon>
        <taxon>eudicotyledons</taxon>
        <taxon>Gunneridae</taxon>
        <taxon>Pentapetalae</taxon>
        <taxon>rosids</taxon>
        <taxon>malvids</taxon>
        <taxon>Brassicales</taxon>
        <taxon>Brassicaceae</taxon>
        <taxon>Camelineae</taxon>
        <taxon>Arabidopsis</taxon>
    </lineage>
</organism>
<evidence type="ECO:0000250" key="1">
    <source>
        <dbReference type="UniProtKB" id="O95486"/>
    </source>
</evidence>
<evidence type="ECO:0000256" key="2">
    <source>
        <dbReference type="SAM" id="MobiDB-lite"/>
    </source>
</evidence>
<evidence type="ECO:0000269" key="3">
    <source>
    </source>
</evidence>
<evidence type="ECO:0000303" key="4">
    <source>
    </source>
</evidence>
<evidence type="ECO:0000303" key="5">
    <source>
    </source>
</evidence>
<evidence type="ECO:0000303" key="6">
    <source>
    </source>
</evidence>
<evidence type="ECO:0000305" key="7"/>
<evidence type="ECO:0000312" key="8">
    <source>
        <dbReference type="Araport" id="AT4G32640"/>
    </source>
</evidence>
<evidence type="ECO:0000312" key="9">
    <source>
        <dbReference type="EMBL" id="CAA18597.1"/>
    </source>
</evidence>
<keyword id="KW-0968">Cytoplasmic vesicle</keyword>
<keyword id="KW-0256">Endoplasmic reticulum</keyword>
<keyword id="KW-0931">ER-Golgi transport</keyword>
<keyword id="KW-0333">Golgi apparatus</keyword>
<keyword id="KW-0472">Membrane</keyword>
<keyword id="KW-0479">Metal-binding</keyword>
<keyword id="KW-0653">Protein transport</keyword>
<keyword id="KW-1185">Reference proteome</keyword>
<keyword id="KW-0813">Transport</keyword>
<keyword id="KW-0862">Zinc</keyword>
<feature type="chain" id="PRO_0000205159" description="Protein transport protein SEC24 C">
    <location>
        <begin position="1"/>
        <end position="1080"/>
    </location>
</feature>
<feature type="region of interest" description="Disordered" evidence="2">
    <location>
        <begin position="1"/>
        <end position="189"/>
    </location>
</feature>
<feature type="region of interest" description="Disordered" evidence="2">
    <location>
        <begin position="201"/>
        <end position="220"/>
    </location>
</feature>
<feature type="region of interest" description="Disordered" evidence="2">
    <location>
        <begin position="316"/>
        <end position="367"/>
    </location>
</feature>
<feature type="region of interest" description="Zinc finger-like" evidence="1">
    <location>
        <begin position="430"/>
        <end position="455"/>
    </location>
</feature>
<feature type="compositionally biased region" description="Pro residues" evidence="2">
    <location>
        <begin position="1"/>
        <end position="10"/>
    </location>
</feature>
<feature type="compositionally biased region" description="Polar residues" evidence="2">
    <location>
        <begin position="12"/>
        <end position="43"/>
    </location>
</feature>
<feature type="compositionally biased region" description="Pro residues" evidence="2">
    <location>
        <begin position="45"/>
        <end position="70"/>
    </location>
</feature>
<feature type="compositionally biased region" description="Low complexity" evidence="2">
    <location>
        <begin position="71"/>
        <end position="84"/>
    </location>
</feature>
<feature type="compositionally biased region" description="Low complexity" evidence="2">
    <location>
        <begin position="142"/>
        <end position="160"/>
    </location>
</feature>
<feature type="compositionally biased region" description="Low complexity" evidence="2">
    <location>
        <begin position="178"/>
        <end position="189"/>
    </location>
</feature>
<feature type="compositionally biased region" description="Polar residues" evidence="2">
    <location>
        <begin position="340"/>
        <end position="356"/>
    </location>
</feature>
<feature type="binding site" evidence="1">
    <location>
        <position position="430"/>
    </location>
    <ligand>
        <name>Zn(2+)</name>
        <dbReference type="ChEBI" id="CHEBI:29105"/>
    </ligand>
</feature>
<feature type="binding site" evidence="1">
    <location>
        <position position="433"/>
    </location>
    <ligand>
        <name>Zn(2+)</name>
        <dbReference type="ChEBI" id="CHEBI:29105"/>
    </ligand>
</feature>
<feature type="binding site" evidence="1">
    <location>
        <position position="452"/>
    </location>
    <ligand>
        <name>Zn(2+)</name>
        <dbReference type="ChEBI" id="CHEBI:29105"/>
    </ligand>
</feature>
<feature type="binding site" evidence="1">
    <location>
        <position position="455"/>
    </location>
    <ligand>
        <name>Zn(2+)</name>
        <dbReference type="ChEBI" id="CHEBI:29105"/>
    </ligand>
</feature>
<protein>
    <recommendedName>
        <fullName evidence="5 6">Protein transport protein SEC24 C</fullName>
    </recommendedName>
    <alternativeName>
        <fullName evidence="4">Lst1-homolog protein B</fullName>
        <shortName evidence="4">AtLst1B</shortName>
    </alternativeName>
</protein>
<accession>Q9M081</accession>
<accession>F4JV31</accession>
<accession>O65535</accession>
<proteinExistence type="evidence at transcript level"/>
<gene>
    <name evidence="5 6" type="primary">SEC24C</name>
    <name evidence="4" type="synonym">Lst1B</name>
    <name evidence="8" type="ordered locus">At4g32640</name>
    <name evidence="9" type="ORF">F4D11.160</name>
</gene>
<dbReference type="EMBL" id="AL022537">
    <property type="protein sequence ID" value="CAA18597.1"/>
    <property type="status" value="ALT_SEQ"/>
    <property type="molecule type" value="Genomic_DNA"/>
</dbReference>
<dbReference type="EMBL" id="AL161581">
    <property type="protein sequence ID" value="CAB79981.1"/>
    <property type="status" value="ALT_SEQ"/>
    <property type="molecule type" value="Genomic_DNA"/>
</dbReference>
<dbReference type="EMBL" id="CP002687">
    <property type="protein sequence ID" value="AEE86094.1"/>
    <property type="molecule type" value="Genomic_DNA"/>
</dbReference>
<dbReference type="EMBL" id="CP002687">
    <property type="protein sequence ID" value="AEE86095.1"/>
    <property type="molecule type" value="Genomic_DNA"/>
</dbReference>
<dbReference type="PIR" id="D85383">
    <property type="entry name" value="D85383"/>
</dbReference>
<dbReference type="RefSeq" id="NP_001119101.5">
    <property type="nucleotide sequence ID" value="NM_001125629.5"/>
</dbReference>
<dbReference type="RefSeq" id="NP_194990.5">
    <property type="nucleotide sequence ID" value="NM_119416.8"/>
</dbReference>
<dbReference type="SMR" id="Q9M081"/>
<dbReference type="BioGRID" id="14685">
    <property type="interactions" value="6"/>
</dbReference>
<dbReference type="FunCoup" id="Q9M081">
    <property type="interactions" value="4516"/>
</dbReference>
<dbReference type="STRING" id="3702.Q9M081"/>
<dbReference type="iPTMnet" id="Q9M081"/>
<dbReference type="PaxDb" id="3702-AT4G32640.2"/>
<dbReference type="ProteomicsDB" id="232933"/>
<dbReference type="EnsemblPlants" id="AT4G32640.1">
    <property type="protein sequence ID" value="AT4G32640.1"/>
    <property type="gene ID" value="AT4G32640"/>
</dbReference>
<dbReference type="EnsemblPlants" id="AT4G32640.2">
    <property type="protein sequence ID" value="AT4G32640.2"/>
    <property type="gene ID" value="AT4G32640"/>
</dbReference>
<dbReference type="GeneID" id="829399"/>
<dbReference type="Gramene" id="AT4G32640.1">
    <property type="protein sequence ID" value="AT4G32640.1"/>
    <property type="gene ID" value="AT4G32640"/>
</dbReference>
<dbReference type="Gramene" id="AT4G32640.2">
    <property type="protein sequence ID" value="AT4G32640.2"/>
    <property type="gene ID" value="AT4G32640"/>
</dbReference>
<dbReference type="KEGG" id="ath:AT4G32640"/>
<dbReference type="Araport" id="AT4G32640"/>
<dbReference type="TAIR" id="AT4G32640"/>
<dbReference type="eggNOG" id="KOG1984">
    <property type="taxonomic scope" value="Eukaryota"/>
</dbReference>
<dbReference type="HOGENOM" id="CLU_004589_4_0_1"/>
<dbReference type="InParanoid" id="Q9M081"/>
<dbReference type="OMA" id="INPFMTF"/>
<dbReference type="PRO" id="PR:Q9M081"/>
<dbReference type="Proteomes" id="UP000006548">
    <property type="component" value="Chromosome 4"/>
</dbReference>
<dbReference type="ExpressionAtlas" id="Q9M081">
    <property type="expression patterns" value="baseline and differential"/>
</dbReference>
<dbReference type="GO" id="GO:0030127">
    <property type="term" value="C:COPII vesicle coat"/>
    <property type="evidence" value="ECO:0007669"/>
    <property type="project" value="InterPro"/>
</dbReference>
<dbReference type="GO" id="GO:0005789">
    <property type="term" value="C:endoplasmic reticulum membrane"/>
    <property type="evidence" value="ECO:0007669"/>
    <property type="project" value="UniProtKB-SubCell"/>
</dbReference>
<dbReference type="GO" id="GO:0000139">
    <property type="term" value="C:Golgi membrane"/>
    <property type="evidence" value="ECO:0007669"/>
    <property type="project" value="UniProtKB-SubCell"/>
</dbReference>
<dbReference type="GO" id="GO:0008270">
    <property type="term" value="F:zinc ion binding"/>
    <property type="evidence" value="ECO:0007669"/>
    <property type="project" value="InterPro"/>
</dbReference>
<dbReference type="GO" id="GO:0006888">
    <property type="term" value="P:endoplasmic reticulum to Golgi vesicle-mediated transport"/>
    <property type="evidence" value="ECO:0007669"/>
    <property type="project" value="InterPro"/>
</dbReference>
<dbReference type="GO" id="GO:0006886">
    <property type="term" value="P:intracellular protein transport"/>
    <property type="evidence" value="ECO:0007669"/>
    <property type="project" value="InterPro"/>
</dbReference>
<dbReference type="CDD" id="cd01479">
    <property type="entry name" value="Sec24-like"/>
    <property type="match status" value="1"/>
</dbReference>
<dbReference type="FunFam" id="3.40.50.410:FF:000097">
    <property type="entry name" value="Protein transport protein Sec24-like CEF"/>
    <property type="match status" value="1"/>
</dbReference>
<dbReference type="Gene3D" id="2.60.40.1670">
    <property type="entry name" value="beta-sandwich domain of Sec23/24"/>
    <property type="match status" value="1"/>
</dbReference>
<dbReference type="Gene3D" id="1.20.120.730">
    <property type="entry name" value="Sec23/Sec24 helical domain"/>
    <property type="match status" value="1"/>
</dbReference>
<dbReference type="Gene3D" id="3.40.20.10">
    <property type="entry name" value="Severin"/>
    <property type="match status" value="1"/>
</dbReference>
<dbReference type="Gene3D" id="3.40.50.410">
    <property type="entry name" value="von Willebrand factor, type A domain"/>
    <property type="match status" value="1"/>
</dbReference>
<dbReference type="Gene3D" id="2.30.30.380">
    <property type="entry name" value="Zn-finger domain of Sec23/24"/>
    <property type="match status" value="1"/>
</dbReference>
<dbReference type="InterPro" id="IPR029006">
    <property type="entry name" value="ADF-H/Gelsolin-like_dom_sf"/>
</dbReference>
<dbReference type="InterPro" id="IPR007123">
    <property type="entry name" value="Gelsolin-like_dom"/>
</dbReference>
<dbReference type="InterPro" id="IPR036180">
    <property type="entry name" value="Gelsolin-like_dom_sf"/>
</dbReference>
<dbReference type="InterPro" id="IPR006900">
    <property type="entry name" value="Sec23/24_helical_dom"/>
</dbReference>
<dbReference type="InterPro" id="IPR036175">
    <property type="entry name" value="Sec23/24_helical_dom_sf"/>
</dbReference>
<dbReference type="InterPro" id="IPR006896">
    <property type="entry name" value="Sec23/24_trunk_dom"/>
</dbReference>
<dbReference type="InterPro" id="IPR012990">
    <property type="entry name" value="Sec23_24_beta_S"/>
</dbReference>
<dbReference type="InterPro" id="IPR050550">
    <property type="entry name" value="SEC23_SEC24_subfamily"/>
</dbReference>
<dbReference type="InterPro" id="IPR041742">
    <property type="entry name" value="Sec24-like_trunk_dom"/>
</dbReference>
<dbReference type="InterPro" id="IPR036465">
    <property type="entry name" value="vWFA_dom_sf"/>
</dbReference>
<dbReference type="InterPro" id="IPR006895">
    <property type="entry name" value="Znf_Sec23_Sec24"/>
</dbReference>
<dbReference type="InterPro" id="IPR036174">
    <property type="entry name" value="Znf_Sec23_Sec24_sf"/>
</dbReference>
<dbReference type="PANTHER" id="PTHR13803">
    <property type="entry name" value="SEC24-RELATED PROTEIN"/>
    <property type="match status" value="1"/>
</dbReference>
<dbReference type="PANTHER" id="PTHR13803:SF4">
    <property type="entry name" value="SECRETORY 24CD, ISOFORM C"/>
    <property type="match status" value="1"/>
</dbReference>
<dbReference type="Pfam" id="PF00626">
    <property type="entry name" value="Gelsolin"/>
    <property type="match status" value="1"/>
</dbReference>
<dbReference type="Pfam" id="PF08033">
    <property type="entry name" value="Sec23_BS"/>
    <property type="match status" value="1"/>
</dbReference>
<dbReference type="Pfam" id="PF04815">
    <property type="entry name" value="Sec23_helical"/>
    <property type="match status" value="1"/>
</dbReference>
<dbReference type="Pfam" id="PF04811">
    <property type="entry name" value="Sec23_trunk"/>
    <property type="match status" value="1"/>
</dbReference>
<dbReference type="Pfam" id="PF04810">
    <property type="entry name" value="zf-Sec23_Sec24"/>
    <property type="match status" value="1"/>
</dbReference>
<dbReference type="SUPFAM" id="SSF81995">
    <property type="entry name" value="beta-sandwich domain of Sec23/24"/>
    <property type="match status" value="1"/>
</dbReference>
<dbReference type="SUPFAM" id="SSF82754">
    <property type="entry name" value="C-terminal, gelsolin-like domain of Sec23/24"/>
    <property type="match status" value="1"/>
</dbReference>
<dbReference type="SUPFAM" id="SSF81811">
    <property type="entry name" value="Helical domain of Sec23/24"/>
    <property type="match status" value="1"/>
</dbReference>
<dbReference type="SUPFAM" id="SSF53300">
    <property type="entry name" value="vWA-like"/>
    <property type="match status" value="1"/>
</dbReference>
<dbReference type="SUPFAM" id="SSF82919">
    <property type="entry name" value="Zn-finger domain of Sec23/24"/>
    <property type="match status" value="1"/>
</dbReference>
<name>SC24C_ARATH</name>
<reference key="1">
    <citation type="journal article" date="1999" name="Nature">
        <title>Sequence and analysis of chromosome 4 of the plant Arabidopsis thaliana.</title>
        <authorList>
            <person name="Mayer K.F.X."/>
            <person name="Schueller C."/>
            <person name="Wambutt R."/>
            <person name="Murphy G."/>
            <person name="Volckaert G."/>
            <person name="Pohl T."/>
            <person name="Duesterhoeft A."/>
            <person name="Stiekema W."/>
            <person name="Entian K.-D."/>
            <person name="Terryn N."/>
            <person name="Harris B."/>
            <person name="Ansorge W."/>
            <person name="Brandt P."/>
            <person name="Grivell L.A."/>
            <person name="Rieger M."/>
            <person name="Weichselgartner M."/>
            <person name="de Simone V."/>
            <person name="Obermaier B."/>
            <person name="Mache R."/>
            <person name="Mueller M."/>
            <person name="Kreis M."/>
            <person name="Delseny M."/>
            <person name="Puigdomenech P."/>
            <person name="Watson M."/>
            <person name="Schmidtheini T."/>
            <person name="Reichert B."/>
            <person name="Portetelle D."/>
            <person name="Perez-Alonso M."/>
            <person name="Boutry M."/>
            <person name="Bancroft I."/>
            <person name="Vos P."/>
            <person name="Hoheisel J."/>
            <person name="Zimmermann W."/>
            <person name="Wedler H."/>
            <person name="Ridley P."/>
            <person name="Langham S.-A."/>
            <person name="McCullagh B."/>
            <person name="Bilham L."/>
            <person name="Robben J."/>
            <person name="van der Schueren J."/>
            <person name="Grymonprez B."/>
            <person name="Chuang Y.-J."/>
            <person name="Vandenbussche F."/>
            <person name="Braeken M."/>
            <person name="Weltjens I."/>
            <person name="Voet M."/>
            <person name="Bastiaens I."/>
            <person name="Aert R."/>
            <person name="Defoor E."/>
            <person name="Weitzenegger T."/>
            <person name="Bothe G."/>
            <person name="Ramsperger U."/>
            <person name="Hilbert H."/>
            <person name="Braun M."/>
            <person name="Holzer E."/>
            <person name="Brandt A."/>
            <person name="Peters S."/>
            <person name="van Staveren M."/>
            <person name="Dirkse W."/>
            <person name="Mooijman P."/>
            <person name="Klein Lankhorst R."/>
            <person name="Rose M."/>
            <person name="Hauf J."/>
            <person name="Koetter P."/>
            <person name="Berneiser S."/>
            <person name="Hempel S."/>
            <person name="Feldpausch M."/>
            <person name="Lamberth S."/>
            <person name="Van den Daele H."/>
            <person name="De Keyser A."/>
            <person name="Buysshaert C."/>
            <person name="Gielen J."/>
            <person name="Villarroel R."/>
            <person name="De Clercq R."/>
            <person name="van Montagu M."/>
            <person name="Rogers J."/>
            <person name="Cronin A."/>
            <person name="Quail M.A."/>
            <person name="Bray-Allen S."/>
            <person name="Clark L."/>
            <person name="Doggett J."/>
            <person name="Hall S."/>
            <person name="Kay M."/>
            <person name="Lennard N."/>
            <person name="McLay K."/>
            <person name="Mayes R."/>
            <person name="Pettett A."/>
            <person name="Rajandream M.A."/>
            <person name="Lyne M."/>
            <person name="Benes V."/>
            <person name="Rechmann S."/>
            <person name="Borkova D."/>
            <person name="Bloecker H."/>
            <person name="Scharfe M."/>
            <person name="Grimm M."/>
            <person name="Loehnert T.-H."/>
            <person name="Dose S."/>
            <person name="de Haan M."/>
            <person name="Maarse A.C."/>
            <person name="Schaefer M."/>
            <person name="Mueller-Auer S."/>
            <person name="Gabel C."/>
            <person name="Fuchs M."/>
            <person name="Fartmann B."/>
            <person name="Granderath K."/>
            <person name="Dauner D."/>
            <person name="Herzl A."/>
            <person name="Neumann S."/>
            <person name="Argiriou A."/>
            <person name="Vitale D."/>
            <person name="Liguori R."/>
            <person name="Piravandi E."/>
            <person name="Massenet O."/>
            <person name="Quigley F."/>
            <person name="Clabauld G."/>
            <person name="Muendlein A."/>
            <person name="Felber R."/>
            <person name="Schnabl S."/>
            <person name="Hiller R."/>
            <person name="Schmidt W."/>
            <person name="Lecharny A."/>
            <person name="Aubourg S."/>
            <person name="Chefdor F."/>
            <person name="Cooke R."/>
            <person name="Berger C."/>
            <person name="Monfort A."/>
            <person name="Casacuberta E."/>
            <person name="Gibbons T."/>
            <person name="Weber N."/>
            <person name="Vandenbol M."/>
            <person name="Bargues M."/>
            <person name="Terol J."/>
            <person name="Torres A."/>
            <person name="Perez-Perez A."/>
            <person name="Purnelle B."/>
            <person name="Bent E."/>
            <person name="Johnson S."/>
            <person name="Tacon D."/>
            <person name="Jesse T."/>
            <person name="Heijnen L."/>
            <person name="Schwarz S."/>
            <person name="Scholler P."/>
            <person name="Heber S."/>
            <person name="Francs P."/>
            <person name="Bielke C."/>
            <person name="Frishman D."/>
            <person name="Haase D."/>
            <person name="Lemcke K."/>
            <person name="Mewes H.-W."/>
            <person name="Stocker S."/>
            <person name="Zaccaria P."/>
            <person name="Bevan M."/>
            <person name="Wilson R.K."/>
            <person name="de la Bastide M."/>
            <person name="Habermann K."/>
            <person name="Parnell L."/>
            <person name="Dedhia N."/>
            <person name="Gnoj L."/>
            <person name="Schutz K."/>
            <person name="Huang E."/>
            <person name="Spiegel L."/>
            <person name="Sekhon M."/>
            <person name="Murray J."/>
            <person name="Sheet P."/>
            <person name="Cordes M."/>
            <person name="Abu-Threideh J."/>
            <person name="Stoneking T."/>
            <person name="Kalicki J."/>
            <person name="Graves T."/>
            <person name="Harmon G."/>
            <person name="Edwards J."/>
            <person name="Latreille P."/>
            <person name="Courtney L."/>
            <person name="Cloud J."/>
            <person name="Abbott A."/>
            <person name="Scott K."/>
            <person name="Johnson D."/>
            <person name="Minx P."/>
            <person name="Bentley D."/>
            <person name="Fulton B."/>
            <person name="Miller N."/>
            <person name="Greco T."/>
            <person name="Kemp K."/>
            <person name="Kramer J."/>
            <person name="Fulton L."/>
            <person name="Mardis E."/>
            <person name="Dante M."/>
            <person name="Pepin K."/>
            <person name="Hillier L.W."/>
            <person name="Nelson J."/>
            <person name="Spieth J."/>
            <person name="Ryan E."/>
            <person name="Andrews S."/>
            <person name="Geisel C."/>
            <person name="Layman D."/>
            <person name="Du H."/>
            <person name="Ali J."/>
            <person name="Berghoff A."/>
            <person name="Jones K."/>
            <person name="Drone K."/>
            <person name="Cotton M."/>
            <person name="Joshu C."/>
            <person name="Antonoiu B."/>
            <person name="Zidanic M."/>
            <person name="Strong C."/>
            <person name="Sun H."/>
            <person name="Lamar B."/>
            <person name="Yordan C."/>
            <person name="Ma P."/>
            <person name="Zhong J."/>
            <person name="Preston R."/>
            <person name="Vil D."/>
            <person name="Shekher M."/>
            <person name="Matero A."/>
            <person name="Shah R."/>
            <person name="Swaby I.K."/>
            <person name="O'Shaughnessy A."/>
            <person name="Rodriguez M."/>
            <person name="Hoffman J."/>
            <person name="Till S."/>
            <person name="Granat S."/>
            <person name="Shohdy N."/>
            <person name="Hasegawa A."/>
            <person name="Hameed A."/>
            <person name="Lodhi M."/>
            <person name="Johnson A."/>
            <person name="Chen E."/>
            <person name="Marra M.A."/>
            <person name="Martienssen R."/>
            <person name="McCombie W.R."/>
        </authorList>
    </citation>
    <scope>NUCLEOTIDE SEQUENCE [LARGE SCALE GENOMIC DNA]</scope>
    <source>
        <strain>cv. Columbia</strain>
    </source>
</reference>
<reference key="2">
    <citation type="journal article" date="2017" name="Plant J.">
        <title>Araport11: a complete reannotation of the Arabidopsis thaliana reference genome.</title>
        <authorList>
            <person name="Cheng C.Y."/>
            <person name="Krishnakumar V."/>
            <person name="Chan A.P."/>
            <person name="Thibaud-Nissen F."/>
            <person name="Schobel S."/>
            <person name="Town C.D."/>
        </authorList>
    </citation>
    <scope>GENOME REANNOTATION</scope>
    <source>
        <strain>cv. Columbia</strain>
    </source>
</reference>
<reference key="3">
    <citation type="journal article" date="2011" name="J. Exp. Bot.">
        <title>Evidence for the involvement of the Arabidopsis SEC24A in male transmission.</title>
        <authorList>
            <person name="Conger R."/>
            <person name="Chen Y."/>
            <person name="Fornaciari S."/>
            <person name="Faso C."/>
            <person name="Held M.A."/>
            <person name="Renna L."/>
            <person name="Brandizzi F."/>
        </authorList>
    </citation>
    <scope>TISSUE SPECIFICITY</scope>
    <scope>DEVELOPMENTAL STAGE</scope>
    <source>
        <strain>cv. Columbia</strain>
    </source>
</reference>
<reference key="4">
    <citation type="journal article" date="2014" name="Plant Physiol.">
        <title>Endomembrane trafficking protein SEC24A regulates cell size patterning in Arabidopsis.</title>
        <authorList>
            <person name="Qu X."/>
            <person name="Chatty P.R."/>
            <person name="Roeder A.H.K."/>
        </authorList>
    </citation>
    <scope>GENE FAMILY</scope>
    <source>
        <strain>cv. Landsberg erecta</strain>
    </source>
</reference>
<reference key="5">
    <citation type="journal article" date="2014" name="PLoS ONE">
        <title>Study of the plant COPII vesicle coat subunits by functional complementation of yeast Saccharomyces cerevisiae mutants.</title>
        <authorList>
            <person name="De Craene J.-O."/>
            <person name="Courte F."/>
            <person name="Rinaldi B."/>
            <person name="Fitterer C."/>
            <person name="Herranz M.C."/>
            <person name="Schmitt-Keichinger C."/>
            <person name="Ritzenthaler C."/>
            <person name="Friant S."/>
        </authorList>
    </citation>
    <scope>GENE FAMILY</scope>
    <source>
        <strain>cv. Columbia</strain>
    </source>
</reference>
<reference key="6">
    <citation type="journal article" date="2016" name="Trends Plant Sci.">
        <title>COPII paralogs in plants: functional redundancy or diversity?</title>
        <authorList>
            <person name="Chung K.P."/>
            <person name="Zeng Y."/>
            <person name="Jiang L."/>
        </authorList>
    </citation>
    <scope>REVIEW ON COAT PROTEIN COMPLEX II (COPII) VESICLES</scope>
    <scope>GENE FAMILY</scope>
    <scope>NOMENCLATURE</scope>
</reference>